<reference key="1">
    <citation type="journal article" date="2004" name="Am. J. Bot.">
        <title>A phylogeny of legumes (Leguminosae) based on analysis of the plastid matK gene resolves many well-supported subclades within the family.</title>
        <authorList>
            <person name="Wojciechowski M.F."/>
            <person name="Lavin M."/>
            <person name="Sanderson M.J."/>
        </authorList>
        <dbReference type="AGRICOLA" id="IND43661289"/>
    </citation>
    <scope>NUCLEOTIDE SEQUENCE [GENOMIC DNA]</scope>
</reference>
<comment type="function">
    <text evidence="1">Usually encoded in the trnK tRNA gene intron. Probably assists in splicing its own and other chloroplast group II introns.</text>
</comment>
<comment type="subcellular location">
    <subcellularLocation>
        <location>Plastid</location>
        <location>Chloroplast</location>
    </subcellularLocation>
</comment>
<comment type="similarity">
    <text evidence="1">Belongs to the intron maturase 2 family. MatK subfamily.</text>
</comment>
<organism>
    <name type="scientific">Gleditsia triacanthos</name>
    <name type="common">Common honey-locust</name>
    <dbReference type="NCBI Taxonomy" id="54874"/>
    <lineage>
        <taxon>Eukaryota</taxon>
        <taxon>Viridiplantae</taxon>
        <taxon>Streptophyta</taxon>
        <taxon>Embryophyta</taxon>
        <taxon>Tracheophyta</taxon>
        <taxon>Spermatophyta</taxon>
        <taxon>Magnoliopsida</taxon>
        <taxon>eudicotyledons</taxon>
        <taxon>Gunneridae</taxon>
        <taxon>Pentapetalae</taxon>
        <taxon>rosids</taxon>
        <taxon>fabids</taxon>
        <taxon>Fabales</taxon>
        <taxon>Fabaceae</taxon>
        <taxon>Caesalpinioideae</taxon>
        <taxon>Umtiza clade</taxon>
        <taxon>Gleditsia</taxon>
    </lineage>
</organism>
<evidence type="ECO:0000255" key="1">
    <source>
        <dbReference type="HAMAP-Rule" id="MF_01390"/>
    </source>
</evidence>
<gene>
    <name evidence="1" type="primary">matK</name>
</gene>
<proteinExistence type="inferred from homology"/>
<protein>
    <recommendedName>
        <fullName evidence="1">Maturase K</fullName>
    </recommendedName>
    <alternativeName>
        <fullName evidence="1">Intron maturase</fullName>
    </alternativeName>
</protein>
<feature type="chain" id="PRO_0000143400" description="Maturase K">
    <location>
        <begin position="1"/>
        <end position="499"/>
    </location>
</feature>
<sequence>MKEFQVYLELDRSLQHDFLYPLIFREYIYALAYDHGLNSSILVENLGYDNKSSLLIVKRLITRMYQQNHLILSANDSNKNQFWGYNKNLYSQIISEGFAVSVEIPFSLQLISSLEEAEIVKSYNLRSIHSIFPFFEEKFPYLNYVSDVRIPYPIHLEILVQTLRYWVKDASSFHLLRLFLYEYCNWNSLITPKKWISTFSKSNPRLFLFLYNFYVCEYESILIFLRNKSSYLRLTSSGVLFERIYFYAKIEHRVEVFDKDFPSTLWFFKDPFIHYVRYQGKSILSSRNTPFFMNKWKYYLIHLWQCHFYVWSQPGKIHINQLSEHSFYFLGYFSNVRLNPSVVRSQMLENSFIIENVMKKLDTTIPIIPLIRSLAKAKFCNVLGHPISKPVWADSSDFDIIDRFLRICRNLSHYYNGSSNKKSLYRIKYILRLSCIKTLARKHKSTVRVFLKRLGSKFLEEFFTEEEEILSLILPRASFTLQRLYRGRIWYLDIFYFHH</sequence>
<keyword id="KW-0150">Chloroplast</keyword>
<keyword id="KW-0507">mRNA processing</keyword>
<keyword id="KW-0934">Plastid</keyword>
<keyword id="KW-0694">RNA-binding</keyword>
<keyword id="KW-0819">tRNA processing</keyword>
<dbReference type="EMBL" id="AY386849">
    <property type="protein sequence ID" value="AAQ91927.1"/>
    <property type="molecule type" value="Genomic_DNA"/>
</dbReference>
<dbReference type="GO" id="GO:0009507">
    <property type="term" value="C:chloroplast"/>
    <property type="evidence" value="ECO:0007669"/>
    <property type="project" value="UniProtKB-SubCell"/>
</dbReference>
<dbReference type="GO" id="GO:0003723">
    <property type="term" value="F:RNA binding"/>
    <property type="evidence" value="ECO:0007669"/>
    <property type="project" value="UniProtKB-KW"/>
</dbReference>
<dbReference type="GO" id="GO:0006397">
    <property type="term" value="P:mRNA processing"/>
    <property type="evidence" value="ECO:0007669"/>
    <property type="project" value="UniProtKB-KW"/>
</dbReference>
<dbReference type="GO" id="GO:0008380">
    <property type="term" value="P:RNA splicing"/>
    <property type="evidence" value="ECO:0007669"/>
    <property type="project" value="UniProtKB-UniRule"/>
</dbReference>
<dbReference type="GO" id="GO:0008033">
    <property type="term" value="P:tRNA processing"/>
    <property type="evidence" value="ECO:0007669"/>
    <property type="project" value="UniProtKB-KW"/>
</dbReference>
<dbReference type="HAMAP" id="MF_01390">
    <property type="entry name" value="MatK"/>
    <property type="match status" value="1"/>
</dbReference>
<dbReference type="InterPro" id="IPR024937">
    <property type="entry name" value="Domain_X"/>
</dbReference>
<dbReference type="InterPro" id="IPR002866">
    <property type="entry name" value="Maturase_MatK"/>
</dbReference>
<dbReference type="InterPro" id="IPR024942">
    <property type="entry name" value="Maturase_MatK_N"/>
</dbReference>
<dbReference type="PANTHER" id="PTHR34811">
    <property type="entry name" value="MATURASE K"/>
    <property type="match status" value="1"/>
</dbReference>
<dbReference type="PANTHER" id="PTHR34811:SF1">
    <property type="entry name" value="MATURASE K"/>
    <property type="match status" value="1"/>
</dbReference>
<dbReference type="Pfam" id="PF01348">
    <property type="entry name" value="Intron_maturas2"/>
    <property type="match status" value="1"/>
</dbReference>
<dbReference type="Pfam" id="PF01824">
    <property type="entry name" value="MatK_N"/>
    <property type="match status" value="1"/>
</dbReference>
<geneLocation type="chloroplast"/>
<name>MATK_GLETR</name>
<accession>Q5YK53</accession>